<accession>A7X8D4</accession>
<feature type="chain" id="PRO_0000375862" description="Progesterone receptor">
    <location>
        <begin position="1"/>
        <end position="933"/>
    </location>
</feature>
<feature type="domain" description="NR LBD" evidence="6">
    <location>
        <begin position="679"/>
        <end position="913"/>
    </location>
</feature>
<feature type="DNA-binding region" description="Nuclear receptor" evidence="5">
    <location>
        <begin position="567"/>
        <end position="639"/>
    </location>
</feature>
<feature type="zinc finger region" description="NR C4-type" evidence="5">
    <location>
        <begin position="567"/>
        <end position="587"/>
    </location>
</feature>
<feature type="zinc finger region" description="NR C4-type" evidence="5">
    <location>
        <begin position="603"/>
        <end position="627"/>
    </location>
</feature>
<feature type="region of interest" description="Modulating, Pro-Rich">
    <location>
        <begin position="1"/>
        <end position="566"/>
    </location>
</feature>
<feature type="region of interest" description="AF3; mediates transcriptional activation" evidence="2">
    <location>
        <begin position="1"/>
        <end position="164"/>
    </location>
</feature>
<feature type="region of interest" description="Disordered" evidence="7">
    <location>
        <begin position="1"/>
        <end position="48"/>
    </location>
</feature>
<feature type="region of interest" description="Disordered" evidence="7">
    <location>
        <begin position="66"/>
        <end position="255"/>
    </location>
</feature>
<feature type="region of interest" description="Mediates transcriptional transrepression" evidence="2">
    <location>
        <begin position="165"/>
        <end position="305"/>
    </location>
</feature>
<feature type="region of interest" description="Disordered" evidence="7">
    <location>
        <begin position="331"/>
        <end position="378"/>
    </location>
</feature>
<feature type="region of interest" description="Disordered" evidence="7">
    <location>
        <begin position="415"/>
        <end position="454"/>
    </location>
</feature>
<feature type="region of interest" description="AF1; mediates transcriptional activation" evidence="2">
    <location>
        <begin position="456"/>
        <end position="546"/>
    </location>
</feature>
<feature type="region of interest" description="AF2; mediates transcriptional activation" evidence="2">
    <location>
        <begin position="687"/>
        <end position="933"/>
    </location>
</feature>
<feature type="short sequence motif" description="LXXL motif 1" evidence="2">
    <location>
        <begin position="55"/>
        <end position="59"/>
    </location>
</feature>
<feature type="short sequence motif" description="LXXL motif 2" evidence="2">
    <location>
        <begin position="115"/>
        <end position="119"/>
    </location>
</feature>
<feature type="short sequence motif" description="Nuclear localization signal" evidence="4">
    <location>
        <begin position="183"/>
        <end position="187"/>
    </location>
</feature>
<feature type="compositionally biased region" description="Low complexity" evidence="7">
    <location>
        <begin position="335"/>
        <end position="350"/>
    </location>
</feature>
<feature type="compositionally biased region" description="Pro residues" evidence="7">
    <location>
        <begin position="418"/>
        <end position="433"/>
    </location>
</feature>
<feature type="compositionally biased region" description="Low complexity" evidence="7">
    <location>
        <begin position="437"/>
        <end position="454"/>
    </location>
</feature>
<feature type="modified residue" description="Phosphoserine" evidence="2">
    <location>
        <position position="20"/>
    </location>
</feature>
<feature type="modified residue" description="Phosphoserine" evidence="2">
    <location>
        <position position="81"/>
    </location>
</feature>
<feature type="modified residue" description="Phosphoserine" evidence="2">
    <location>
        <position position="130"/>
    </location>
</feature>
<feature type="modified residue" description="Phosphoserine" evidence="2">
    <location>
        <position position="162"/>
    </location>
</feature>
<feature type="modified residue" description="Phosphoserine" evidence="2">
    <location>
        <position position="190"/>
    </location>
</feature>
<feature type="modified residue" description="Phosphoserine" evidence="2">
    <location>
        <position position="213"/>
    </location>
</feature>
<feature type="modified residue" description="Phosphoserine; by MAPK1" evidence="2">
    <location>
        <position position="294"/>
    </location>
</feature>
<feature type="modified residue" description="Phosphoserine; by MAPK" evidence="2">
    <location>
        <position position="345"/>
    </location>
</feature>
<feature type="modified residue" description="Phosphoserine; by CDK2" evidence="2">
    <location>
        <position position="400"/>
    </location>
</feature>
<feature type="modified residue" description="Phosphoserine" evidence="2">
    <location>
        <position position="676"/>
    </location>
</feature>
<feature type="cross-link" description="Glycyl lysine isopeptide (Lys-Gly) (interchain with G-Cter in SUMO); alternate" evidence="1">
    <location>
        <position position="388"/>
    </location>
</feature>
<feature type="cross-link" description="Glycyl lysine isopeptide (Lys-Gly) (interchain with G-Cter in ubiquitin); alternate" evidence="2">
    <location>
        <position position="388"/>
    </location>
</feature>
<feature type="cross-link" description="Glycyl lysine isopeptide (Lys-Gly) (interchain with G-Cter in SUMO)" evidence="1">
    <location>
        <position position="531"/>
    </location>
</feature>
<keyword id="KW-0963">Cytoplasm</keyword>
<keyword id="KW-0238">DNA-binding</keyword>
<keyword id="KW-1017">Isopeptide bond</keyword>
<keyword id="KW-0446">Lipid-binding</keyword>
<keyword id="KW-0449">Lipoprotein</keyword>
<keyword id="KW-0479">Metal-binding</keyword>
<keyword id="KW-0539">Nucleus</keyword>
<keyword id="KW-0564">Palmitate</keyword>
<keyword id="KW-0597">Phosphoprotein</keyword>
<keyword id="KW-0675">Receptor</keyword>
<keyword id="KW-0754">Steroid-binding</keyword>
<keyword id="KW-0804">Transcription</keyword>
<keyword id="KW-0805">Transcription regulation</keyword>
<keyword id="KW-0832">Ubl conjugation</keyword>
<keyword id="KW-0862">Zinc</keyword>
<keyword id="KW-0863">Zinc-finger</keyword>
<comment type="function">
    <text evidence="2">The steroid hormones and their receptors are involved in the regulation of eukaryotic gene expression and affect cellular proliferation and differentiation in target tissues. Transcriptional activator of several progesteron-dependent promoters in a variety of cell types. Involved in activation of SRC-dependent MAPK signaling on hormone stimulation.</text>
</comment>
<comment type="subunit">
    <text evidence="2 3">Interacts with SMARD1 and UNC45A. Interacts with CUEDC2; the interaction promotes ubiquitination, decreases sumoylation, and represses transcriptional activity. Interacts with PIAS3; the interaction promotes sumoylation of PR in a hormone-dependent manner, inhibits DNA-binding, and alters nuclear export. Interacts with SP1; the interaction requires ligand-induced phosphorylation on Ser-345 by ERK1/2-MAPK. Interacts with PRMT2. Interacts with NCOA2 and NCOA1. Interacts with KLF9. Interacts with GTF2B (By similarity).</text>
</comment>
<comment type="subcellular location">
    <subcellularLocation>
        <location>Nucleus</location>
    </subcellularLocation>
    <subcellularLocation>
        <location>Cytoplasm</location>
    </subcellularLocation>
    <text evidence="1">Nucleoplasmic shuttling is both hormone- and cell cycle-dependent. On hormone stimulation, retained in the cytoplasm in the G(1) and G(2)/M phases (By similarity).</text>
</comment>
<comment type="domain">
    <text>Composed of three domains: a modulating N-terminal domain, a DNA-binding domain and a C-terminal ligand-binding domain.</text>
</comment>
<comment type="PTM">
    <text evidence="1">Phosphorylated on multiple serine sites. Several of these sites are hormone-dependent. Phosphorylation on Ser-294 is highly hormone-dependent and modulates ubiquitination and sumoylation on Lys-388. Phosphorylation on Ser-345 also requires induction by hormone. Basal phosphorylation on Ser-81, Ser-162, Ser-190 and Ser-400 is increased in response to progesterone and can be phosphorylated in vitro by the CDK2-A1 complex. Increased levels of phosphorylation on Ser-400 also in the presence of EGF, heregulin, IGF, PMA and FBS. Phosphorylation at this site by CDK2 is ligand-independent, and increases nuclear translocation and transcriptional activity. Phosphorylation at Ser-162 and Ser-294, but not at Ser-190, is impaired during the G(2)/M phase of the cell cycle. Phosphorylation on Ser-345 by ERK1/2 MAPK is required for interaction with SP1 (By similarity).</text>
</comment>
<comment type="PTM">
    <text evidence="1">Sumoylation is hormone-dependent and represses transcriptional activity. Sumoylation on all three sites is enhanced by PIAS3. Desumoylated by SENP1. Sumoylation on Lys-388, the main site of sumoylation, is repressed by ubiquitination on the same site, and modulated by phosphorylation at Ser-294 (By similarity).</text>
</comment>
<comment type="PTM">
    <text evidence="1">Ubiquitination is hormone-dependent and represses sumoylation on the same site. Promoted by MAPK-mediated phosphorylation on Ser-294 (By similarity).</text>
</comment>
<comment type="PTM">
    <text evidence="1">Palmitoylated by ZDHHC7 and ZDHHC21. Palmitoylation is required for plasma membrane targeting and for rapid intracellular signaling via ERK and AKT kinases and cAMP generation (By similarity).</text>
</comment>
<comment type="similarity">
    <text evidence="8">Belongs to the nuclear hormone receptor family.</text>
</comment>
<organism>
    <name type="scientific">Trachypithecus obscurus</name>
    <name type="common">Dusky leaf-monkey</name>
    <name type="synonym">Presbytis obscura</name>
    <dbReference type="NCBI Taxonomy" id="54181"/>
    <lineage>
        <taxon>Eukaryota</taxon>
        <taxon>Metazoa</taxon>
        <taxon>Chordata</taxon>
        <taxon>Craniata</taxon>
        <taxon>Vertebrata</taxon>
        <taxon>Euteleostomi</taxon>
        <taxon>Mammalia</taxon>
        <taxon>Eutheria</taxon>
        <taxon>Euarchontoglires</taxon>
        <taxon>Primates</taxon>
        <taxon>Haplorrhini</taxon>
        <taxon>Catarrhini</taxon>
        <taxon>Cercopithecidae</taxon>
        <taxon>Colobinae</taxon>
        <taxon>Trachypithecus</taxon>
    </lineage>
</organism>
<sequence>MTELKAKGPRAPHVAGGPPSPEVGSPLLCRPAAGPFEGSQTSDTLPEVSAIPISLDGLLFPRLCQGQDLPDEKTQDQQSLSDVEGAYSRAEATRGTGGSSSRPPGKDSGLLDSVLDTLLAPSGPGQSQPSPPACEVTSSWCLFGPELPEDPPAAPATQRVLSPLMSRSGGKTGDSSGTAAAHKVLPRGLSPSRQLLLPASGSPHWSGAPVKPSPQPTAVEVEEEDGSGSEDSAGPLLKGKPRVPGGAAAGGGAAAVPPGAAAGGVGLVPKEDSRFSAPRVALVEQDAPMAPGRSPLATTMMDFIHVPIVPLNHALLAARTRQLLEDESYDGGAGAASAFAPPQSSPSASSTPVAVGDFPDCAYPPDAEPKDNAYPLYGDFQPPALKIKEEEEGAEASARSPGSYLVAGANPAAFPDYPLGPPPQLPPRAPPSRPGEAAVTAAPASASVSSASSPGSTLECILYKAEGAPPQQGQFAPPPCKAPGAGGCLLPRDGLPSTSASAAAAGAAPALYPALGLNGLPQLGYQAAVLKESLQQVYPPYLNYLRPDSEASQSPQYSFESLPQKICLICGDEASGCHYGVLTCGSCKVFFKRAMEGQHNYLCAGRNDCIVDKIRRKNCPACRLRKCCQAGMVLGGRKFKKFNKVRVMRALDAVALPQPVGIPNESQVLSQRFTFSPGQDIQLIPPLIKLLMSIEPDVIYAGHDNSKPDTSSSLLTSLNQLGERQLLSVVKWSKSLPGFRNLHIDDQITLIQYSWMSLMVFGLGWRSYKHVSGQMLYFAPDLILNEQRMKESSFYSLCLTMWQIPQEFVKLQVSQEEFLCMKVLLLLNTIPLEGLRSQTQFEEMRSSYIRELIKAIGLRQKGVVPSSQRFYQLTKLLDNLHDLVKQLHLYCLNTFIQSRALSVEFPEMMSEVIAAQLPKILAGMVKPLLFHKK</sequence>
<evidence type="ECO:0000250" key="1"/>
<evidence type="ECO:0000250" key="2">
    <source>
        <dbReference type="UniProtKB" id="P06401"/>
    </source>
</evidence>
<evidence type="ECO:0000250" key="3">
    <source>
        <dbReference type="UniProtKB" id="Q00175"/>
    </source>
</evidence>
<evidence type="ECO:0000255" key="4"/>
<evidence type="ECO:0000255" key="5">
    <source>
        <dbReference type="PROSITE-ProRule" id="PRU00407"/>
    </source>
</evidence>
<evidence type="ECO:0000255" key="6">
    <source>
        <dbReference type="PROSITE-ProRule" id="PRU01189"/>
    </source>
</evidence>
<evidence type="ECO:0000256" key="7">
    <source>
        <dbReference type="SAM" id="MobiDB-lite"/>
    </source>
</evidence>
<evidence type="ECO:0000305" key="8"/>
<gene>
    <name type="primary">PGR</name>
    <name type="synonym">NR3C3</name>
</gene>
<reference key="1">
    <citation type="journal article" date="2008" name="Mol. Phylogenet. Evol.">
        <title>The human progesterone receptor shows evidence of adaptive evolution associated with its ability to act as a transcription factor.</title>
        <authorList>
            <person name="Chen C."/>
            <person name="Opazo J.C."/>
            <person name="Erez O."/>
            <person name="Uddin M."/>
            <person name="Santolaya-Forgas J."/>
            <person name="Goodman M."/>
            <person name="Grossman L.I."/>
            <person name="Romero R."/>
            <person name="Wildman D.E."/>
        </authorList>
    </citation>
    <scope>NUCLEOTIDE SEQUENCE [GENOMIC DNA]</scope>
</reference>
<dbReference type="EMBL" id="DQ234989">
    <property type="protein sequence ID" value="ABB72149.1"/>
    <property type="molecule type" value="Genomic_DNA"/>
</dbReference>
<dbReference type="SMR" id="A7X8D4"/>
<dbReference type="GO" id="GO:0005737">
    <property type="term" value="C:cytoplasm"/>
    <property type="evidence" value="ECO:0007669"/>
    <property type="project" value="UniProtKB-SubCell"/>
</dbReference>
<dbReference type="GO" id="GO:0005654">
    <property type="term" value="C:nucleoplasm"/>
    <property type="evidence" value="ECO:0007669"/>
    <property type="project" value="UniProtKB-ARBA"/>
</dbReference>
<dbReference type="GO" id="GO:0003707">
    <property type="term" value="F:nuclear steroid receptor activity"/>
    <property type="evidence" value="ECO:0007669"/>
    <property type="project" value="InterPro"/>
</dbReference>
<dbReference type="GO" id="GO:0043565">
    <property type="term" value="F:sequence-specific DNA binding"/>
    <property type="evidence" value="ECO:0007669"/>
    <property type="project" value="InterPro"/>
</dbReference>
<dbReference type="GO" id="GO:0005496">
    <property type="term" value="F:steroid binding"/>
    <property type="evidence" value="ECO:0007669"/>
    <property type="project" value="UniProtKB-KW"/>
</dbReference>
<dbReference type="GO" id="GO:0008270">
    <property type="term" value="F:zinc ion binding"/>
    <property type="evidence" value="ECO:0007669"/>
    <property type="project" value="UniProtKB-KW"/>
</dbReference>
<dbReference type="CDD" id="cd07172">
    <property type="entry name" value="NR_DBD_GR_PR"/>
    <property type="match status" value="1"/>
</dbReference>
<dbReference type="CDD" id="cd07074">
    <property type="entry name" value="NR_LBD_PR"/>
    <property type="match status" value="1"/>
</dbReference>
<dbReference type="FunFam" id="1.10.565.10:FF:000004">
    <property type="entry name" value="Androgen receptor variant"/>
    <property type="match status" value="1"/>
</dbReference>
<dbReference type="FunFam" id="3.30.50.10:FF:000027">
    <property type="entry name" value="Progesterone receptor"/>
    <property type="match status" value="1"/>
</dbReference>
<dbReference type="Gene3D" id="3.30.50.10">
    <property type="entry name" value="Erythroid Transcription Factor GATA-1, subunit A"/>
    <property type="match status" value="1"/>
</dbReference>
<dbReference type="Gene3D" id="1.10.565.10">
    <property type="entry name" value="Retinoid X Receptor"/>
    <property type="match status" value="1"/>
</dbReference>
<dbReference type="InterPro" id="IPR035500">
    <property type="entry name" value="NHR-like_dom_sf"/>
</dbReference>
<dbReference type="InterPro" id="IPR000536">
    <property type="entry name" value="Nucl_hrmn_rcpt_lig-bd"/>
</dbReference>
<dbReference type="InterPro" id="IPR050200">
    <property type="entry name" value="Nuclear_hormone_rcpt_NR3"/>
</dbReference>
<dbReference type="InterPro" id="IPR001723">
    <property type="entry name" value="Nuclear_hrmn_rcpt"/>
</dbReference>
<dbReference type="InterPro" id="IPR000128">
    <property type="entry name" value="Progest_rcpt"/>
</dbReference>
<dbReference type="InterPro" id="IPR001628">
    <property type="entry name" value="Znf_hrmn_rcpt"/>
</dbReference>
<dbReference type="InterPro" id="IPR013088">
    <property type="entry name" value="Znf_NHR/GATA"/>
</dbReference>
<dbReference type="PANTHER" id="PTHR48092">
    <property type="entry name" value="KNIRPS-RELATED PROTEIN-RELATED"/>
    <property type="match status" value="1"/>
</dbReference>
<dbReference type="Pfam" id="PF00104">
    <property type="entry name" value="Hormone_recep"/>
    <property type="match status" value="1"/>
</dbReference>
<dbReference type="Pfam" id="PF02161">
    <property type="entry name" value="Prog_receptor"/>
    <property type="match status" value="1"/>
</dbReference>
<dbReference type="Pfam" id="PF00105">
    <property type="entry name" value="zf-C4"/>
    <property type="match status" value="1"/>
</dbReference>
<dbReference type="PRINTS" id="PR00544">
    <property type="entry name" value="PROGESTRONER"/>
</dbReference>
<dbReference type="PRINTS" id="PR00398">
    <property type="entry name" value="STRDHORMONER"/>
</dbReference>
<dbReference type="PRINTS" id="PR00047">
    <property type="entry name" value="STROIDFINGER"/>
</dbReference>
<dbReference type="SMART" id="SM00430">
    <property type="entry name" value="HOLI"/>
    <property type="match status" value="1"/>
</dbReference>
<dbReference type="SMART" id="SM00399">
    <property type="entry name" value="ZnF_C4"/>
    <property type="match status" value="1"/>
</dbReference>
<dbReference type="SUPFAM" id="SSF57716">
    <property type="entry name" value="Glucocorticoid receptor-like (DNA-binding domain)"/>
    <property type="match status" value="1"/>
</dbReference>
<dbReference type="SUPFAM" id="SSF48508">
    <property type="entry name" value="Nuclear receptor ligand-binding domain"/>
    <property type="match status" value="1"/>
</dbReference>
<dbReference type="PROSITE" id="PS51843">
    <property type="entry name" value="NR_LBD"/>
    <property type="match status" value="1"/>
</dbReference>
<dbReference type="PROSITE" id="PS00031">
    <property type="entry name" value="NUCLEAR_REC_DBD_1"/>
    <property type="match status" value="1"/>
</dbReference>
<dbReference type="PROSITE" id="PS51030">
    <property type="entry name" value="NUCLEAR_REC_DBD_2"/>
    <property type="match status" value="1"/>
</dbReference>
<protein>
    <recommendedName>
        <fullName>Progesterone receptor</fullName>
        <shortName>PR</shortName>
    </recommendedName>
    <alternativeName>
        <fullName>Nuclear receptor subfamily 3 group C member 3</fullName>
    </alternativeName>
</protein>
<name>PRGR_TRAOB</name>
<proteinExistence type="inferred from homology"/>